<sequence length="496" mass="57527">MRDEDNNKLILKRKSKLALLREVGNPFINNFKPENLAQNIIQEFKGFSKEELEKKNMQVSIAGRMMLKRVMGKVSFVHVQDSSGKIQLFVTCDKLPESFYNEQFKKWDIGDIIGAIGILFKTNMGELSIRIDDIKLLTKSLRPLPGKFHGLSDQEIRYRQRYVDLIMNKTSRNTFKRRSQIINYIRNFFNHHDFIEVETPMLQTIPGGATAKPFETYHNALDMPMYFRISPELYLKRLIIGGMNKVFEINRNFRNEGLSTRHNPEFTMIEFYQAYGTYHDLMNLTEKLFRSIALDVCGSANVYYQGNNLDFFKSFKRISVVDSILQYNPSLIATDLNQKNAKQTAEKLGIQIKENWGLGKIQIEIFETTVEEKLLQPTFITEYPTEVSPLARRNDDNPFITDRFELFISGCEIANGFSELNDAQDQAERFKKQVEEKDLGNDESMYYDADYIRALEYGMPPTAGEGIGIDRLVMLFTDSPSIRDVILFPHMRAEVK</sequence>
<gene>
    <name evidence="1" type="primary">lysS</name>
    <name type="ordered locus">COSY_0549</name>
</gene>
<comment type="catalytic activity">
    <reaction evidence="1">
        <text>tRNA(Lys) + L-lysine + ATP = L-lysyl-tRNA(Lys) + AMP + diphosphate</text>
        <dbReference type="Rhea" id="RHEA:20792"/>
        <dbReference type="Rhea" id="RHEA-COMP:9696"/>
        <dbReference type="Rhea" id="RHEA-COMP:9697"/>
        <dbReference type="ChEBI" id="CHEBI:30616"/>
        <dbReference type="ChEBI" id="CHEBI:32551"/>
        <dbReference type="ChEBI" id="CHEBI:33019"/>
        <dbReference type="ChEBI" id="CHEBI:78442"/>
        <dbReference type="ChEBI" id="CHEBI:78529"/>
        <dbReference type="ChEBI" id="CHEBI:456215"/>
        <dbReference type="EC" id="6.1.1.6"/>
    </reaction>
</comment>
<comment type="cofactor">
    <cofactor evidence="1">
        <name>Mg(2+)</name>
        <dbReference type="ChEBI" id="CHEBI:18420"/>
    </cofactor>
    <text evidence="1">Binds 3 Mg(2+) ions per subunit.</text>
</comment>
<comment type="subunit">
    <text evidence="1">Homodimer.</text>
</comment>
<comment type="subcellular location">
    <subcellularLocation>
        <location evidence="1">Cytoplasm</location>
    </subcellularLocation>
</comment>
<comment type="similarity">
    <text evidence="1">Belongs to the class-II aminoacyl-tRNA synthetase family.</text>
</comment>
<evidence type="ECO:0000255" key="1">
    <source>
        <dbReference type="HAMAP-Rule" id="MF_00252"/>
    </source>
</evidence>
<feature type="chain" id="PRO_1000204579" description="Lysine--tRNA ligase">
    <location>
        <begin position="1"/>
        <end position="496"/>
    </location>
</feature>
<feature type="binding site" evidence="1">
    <location>
        <position position="405"/>
    </location>
    <ligand>
        <name>Mg(2+)</name>
        <dbReference type="ChEBI" id="CHEBI:18420"/>
        <label>1</label>
    </ligand>
</feature>
<feature type="binding site" evidence="1">
    <location>
        <position position="412"/>
    </location>
    <ligand>
        <name>Mg(2+)</name>
        <dbReference type="ChEBI" id="CHEBI:18420"/>
        <label>1</label>
    </ligand>
</feature>
<feature type="binding site" evidence="1">
    <location>
        <position position="412"/>
    </location>
    <ligand>
        <name>Mg(2+)</name>
        <dbReference type="ChEBI" id="CHEBI:18420"/>
        <label>2</label>
    </ligand>
</feature>
<reference key="1">
    <citation type="journal article" date="2007" name="Curr. Biol.">
        <title>Reduced genome of the thioautotrophic intracellular symbiont in a deep-sea clam, Calyptogena okutanii.</title>
        <authorList>
            <person name="Kuwahara H."/>
            <person name="Yoshida T."/>
            <person name="Takaki Y."/>
            <person name="Shimamura S."/>
            <person name="Nishi S."/>
            <person name="Harada M."/>
            <person name="Matsuyama K."/>
            <person name="Takishita K."/>
            <person name="Kawato M."/>
            <person name="Uematsu K."/>
            <person name="Fujiwara Y."/>
            <person name="Sato T."/>
            <person name="Kato C."/>
            <person name="Kitagawa M."/>
            <person name="Kato I."/>
            <person name="Maruyama T."/>
        </authorList>
    </citation>
    <scope>NUCLEOTIDE SEQUENCE [LARGE SCALE GENOMIC DNA]</scope>
    <source>
        <strain>HA</strain>
    </source>
</reference>
<dbReference type="EC" id="6.1.1.6" evidence="1"/>
<dbReference type="EMBL" id="AP009247">
    <property type="protein sequence ID" value="BAF61666.1"/>
    <property type="molecule type" value="Genomic_DNA"/>
</dbReference>
<dbReference type="RefSeq" id="WP_011929936.1">
    <property type="nucleotide sequence ID" value="NC_009465.1"/>
</dbReference>
<dbReference type="SMR" id="A5CWL4"/>
<dbReference type="STRING" id="412965.COSY_0549"/>
<dbReference type="KEGG" id="vok:COSY_0549"/>
<dbReference type="eggNOG" id="COG1190">
    <property type="taxonomic scope" value="Bacteria"/>
</dbReference>
<dbReference type="HOGENOM" id="CLU_008255_6_0_6"/>
<dbReference type="OrthoDB" id="9802326at2"/>
<dbReference type="Proteomes" id="UP000000247">
    <property type="component" value="Chromosome"/>
</dbReference>
<dbReference type="GO" id="GO:0005829">
    <property type="term" value="C:cytosol"/>
    <property type="evidence" value="ECO:0007669"/>
    <property type="project" value="TreeGrafter"/>
</dbReference>
<dbReference type="GO" id="GO:0005524">
    <property type="term" value="F:ATP binding"/>
    <property type="evidence" value="ECO:0007669"/>
    <property type="project" value="UniProtKB-UniRule"/>
</dbReference>
<dbReference type="GO" id="GO:0004824">
    <property type="term" value="F:lysine-tRNA ligase activity"/>
    <property type="evidence" value="ECO:0007669"/>
    <property type="project" value="UniProtKB-UniRule"/>
</dbReference>
<dbReference type="GO" id="GO:0000287">
    <property type="term" value="F:magnesium ion binding"/>
    <property type="evidence" value="ECO:0007669"/>
    <property type="project" value="UniProtKB-UniRule"/>
</dbReference>
<dbReference type="GO" id="GO:0000049">
    <property type="term" value="F:tRNA binding"/>
    <property type="evidence" value="ECO:0007669"/>
    <property type="project" value="TreeGrafter"/>
</dbReference>
<dbReference type="GO" id="GO:0006430">
    <property type="term" value="P:lysyl-tRNA aminoacylation"/>
    <property type="evidence" value="ECO:0007669"/>
    <property type="project" value="UniProtKB-UniRule"/>
</dbReference>
<dbReference type="CDD" id="cd00775">
    <property type="entry name" value="LysRS_core"/>
    <property type="match status" value="1"/>
</dbReference>
<dbReference type="CDD" id="cd04322">
    <property type="entry name" value="LysRS_N"/>
    <property type="match status" value="1"/>
</dbReference>
<dbReference type="FunFam" id="2.40.50.140:FF:000024">
    <property type="entry name" value="Lysine--tRNA ligase"/>
    <property type="match status" value="1"/>
</dbReference>
<dbReference type="FunFam" id="3.30.930.10:FF:000001">
    <property type="entry name" value="Lysine--tRNA ligase"/>
    <property type="match status" value="1"/>
</dbReference>
<dbReference type="Gene3D" id="3.30.930.10">
    <property type="entry name" value="Bira Bifunctional Protein, Domain 2"/>
    <property type="match status" value="1"/>
</dbReference>
<dbReference type="Gene3D" id="2.40.50.140">
    <property type="entry name" value="Nucleic acid-binding proteins"/>
    <property type="match status" value="1"/>
</dbReference>
<dbReference type="HAMAP" id="MF_00252">
    <property type="entry name" value="Lys_tRNA_synth_class2"/>
    <property type="match status" value="1"/>
</dbReference>
<dbReference type="InterPro" id="IPR004364">
    <property type="entry name" value="Aa-tRNA-synt_II"/>
</dbReference>
<dbReference type="InterPro" id="IPR006195">
    <property type="entry name" value="aa-tRNA-synth_II"/>
</dbReference>
<dbReference type="InterPro" id="IPR045864">
    <property type="entry name" value="aa-tRNA-synth_II/BPL/LPL"/>
</dbReference>
<dbReference type="InterPro" id="IPR002313">
    <property type="entry name" value="Lys-tRNA-ligase_II"/>
</dbReference>
<dbReference type="InterPro" id="IPR044136">
    <property type="entry name" value="Lys-tRNA-ligase_II_N"/>
</dbReference>
<dbReference type="InterPro" id="IPR018149">
    <property type="entry name" value="Lys-tRNA-synth_II_C"/>
</dbReference>
<dbReference type="InterPro" id="IPR012340">
    <property type="entry name" value="NA-bd_OB-fold"/>
</dbReference>
<dbReference type="InterPro" id="IPR004365">
    <property type="entry name" value="NA-bd_OB_tRNA"/>
</dbReference>
<dbReference type="NCBIfam" id="TIGR00499">
    <property type="entry name" value="lysS_bact"/>
    <property type="match status" value="1"/>
</dbReference>
<dbReference type="NCBIfam" id="NF001756">
    <property type="entry name" value="PRK00484.1"/>
    <property type="match status" value="1"/>
</dbReference>
<dbReference type="PANTHER" id="PTHR42918:SF15">
    <property type="entry name" value="LYSINE--TRNA LIGASE, CHLOROPLASTIC_MITOCHONDRIAL"/>
    <property type="match status" value="1"/>
</dbReference>
<dbReference type="PANTHER" id="PTHR42918">
    <property type="entry name" value="LYSYL-TRNA SYNTHETASE"/>
    <property type="match status" value="1"/>
</dbReference>
<dbReference type="Pfam" id="PF00152">
    <property type="entry name" value="tRNA-synt_2"/>
    <property type="match status" value="1"/>
</dbReference>
<dbReference type="Pfam" id="PF01336">
    <property type="entry name" value="tRNA_anti-codon"/>
    <property type="match status" value="1"/>
</dbReference>
<dbReference type="PRINTS" id="PR00982">
    <property type="entry name" value="TRNASYNTHLYS"/>
</dbReference>
<dbReference type="SUPFAM" id="SSF55681">
    <property type="entry name" value="Class II aaRS and biotin synthetases"/>
    <property type="match status" value="1"/>
</dbReference>
<dbReference type="SUPFAM" id="SSF50249">
    <property type="entry name" value="Nucleic acid-binding proteins"/>
    <property type="match status" value="1"/>
</dbReference>
<dbReference type="PROSITE" id="PS50862">
    <property type="entry name" value="AA_TRNA_LIGASE_II"/>
    <property type="match status" value="1"/>
</dbReference>
<accession>A5CWL4</accession>
<organism>
    <name type="scientific">Vesicomyosocius okutanii subsp. Calyptogena okutanii (strain HA)</name>
    <dbReference type="NCBI Taxonomy" id="412965"/>
    <lineage>
        <taxon>Bacteria</taxon>
        <taxon>Pseudomonadati</taxon>
        <taxon>Pseudomonadota</taxon>
        <taxon>Gammaproteobacteria</taxon>
        <taxon>Candidatus Pseudothioglobaceae</taxon>
        <taxon>Candidatus Vesicomyosocius</taxon>
    </lineage>
</organism>
<proteinExistence type="inferred from homology"/>
<keyword id="KW-0030">Aminoacyl-tRNA synthetase</keyword>
<keyword id="KW-0067">ATP-binding</keyword>
<keyword id="KW-0963">Cytoplasm</keyword>
<keyword id="KW-0436">Ligase</keyword>
<keyword id="KW-0460">Magnesium</keyword>
<keyword id="KW-0479">Metal-binding</keyword>
<keyword id="KW-0547">Nucleotide-binding</keyword>
<keyword id="KW-0648">Protein biosynthesis</keyword>
<keyword id="KW-1185">Reference proteome</keyword>
<name>SYK_VESOH</name>
<protein>
    <recommendedName>
        <fullName evidence="1">Lysine--tRNA ligase</fullName>
        <ecNumber evidence="1">6.1.1.6</ecNumber>
    </recommendedName>
    <alternativeName>
        <fullName evidence="1">Lysyl-tRNA synthetase</fullName>
        <shortName evidence="1">LysRS</shortName>
    </alternativeName>
</protein>